<keyword id="KW-0067">ATP-binding</keyword>
<keyword id="KW-0319">Glycerol metabolism</keyword>
<keyword id="KW-0418">Kinase</keyword>
<keyword id="KW-0547">Nucleotide-binding</keyword>
<keyword id="KW-0808">Transferase</keyword>
<proteinExistence type="inferred from homology"/>
<feature type="chain" id="PRO_1000203947" description="Glycerol kinase">
    <location>
        <begin position="1"/>
        <end position="498"/>
    </location>
</feature>
<feature type="binding site" evidence="1">
    <location>
        <position position="12"/>
    </location>
    <ligand>
        <name>ADP</name>
        <dbReference type="ChEBI" id="CHEBI:456216"/>
    </ligand>
</feature>
<feature type="binding site" evidence="1">
    <location>
        <position position="12"/>
    </location>
    <ligand>
        <name>ATP</name>
        <dbReference type="ChEBI" id="CHEBI:30616"/>
    </ligand>
</feature>
<feature type="binding site" evidence="1">
    <location>
        <position position="12"/>
    </location>
    <ligand>
        <name>sn-glycerol 3-phosphate</name>
        <dbReference type="ChEBI" id="CHEBI:57597"/>
    </ligand>
</feature>
<feature type="binding site" evidence="1">
    <location>
        <position position="13"/>
    </location>
    <ligand>
        <name>ATP</name>
        <dbReference type="ChEBI" id="CHEBI:30616"/>
    </ligand>
</feature>
<feature type="binding site" evidence="1">
    <location>
        <position position="14"/>
    </location>
    <ligand>
        <name>ATP</name>
        <dbReference type="ChEBI" id="CHEBI:30616"/>
    </ligand>
</feature>
<feature type="binding site" evidence="1">
    <location>
        <position position="16"/>
    </location>
    <ligand>
        <name>ADP</name>
        <dbReference type="ChEBI" id="CHEBI:456216"/>
    </ligand>
</feature>
<feature type="binding site" evidence="1">
    <location>
        <position position="82"/>
    </location>
    <ligand>
        <name>glycerol</name>
        <dbReference type="ChEBI" id="CHEBI:17754"/>
    </ligand>
</feature>
<feature type="binding site" evidence="1">
    <location>
        <position position="82"/>
    </location>
    <ligand>
        <name>sn-glycerol 3-phosphate</name>
        <dbReference type="ChEBI" id="CHEBI:57597"/>
    </ligand>
</feature>
<feature type="binding site" evidence="1">
    <location>
        <position position="83"/>
    </location>
    <ligand>
        <name>glycerol</name>
        <dbReference type="ChEBI" id="CHEBI:17754"/>
    </ligand>
</feature>
<feature type="binding site" evidence="1">
    <location>
        <position position="83"/>
    </location>
    <ligand>
        <name>sn-glycerol 3-phosphate</name>
        <dbReference type="ChEBI" id="CHEBI:57597"/>
    </ligand>
</feature>
<feature type="binding site" evidence="1">
    <location>
        <position position="134"/>
    </location>
    <ligand>
        <name>glycerol</name>
        <dbReference type="ChEBI" id="CHEBI:17754"/>
    </ligand>
</feature>
<feature type="binding site" evidence="1">
    <location>
        <position position="134"/>
    </location>
    <ligand>
        <name>sn-glycerol 3-phosphate</name>
        <dbReference type="ChEBI" id="CHEBI:57597"/>
    </ligand>
</feature>
<feature type="binding site" evidence="1">
    <location>
        <position position="243"/>
    </location>
    <ligand>
        <name>glycerol</name>
        <dbReference type="ChEBI" id="CHEBI:17754"/>
    </ligand>
</feature>
<feature type="binding site" evidence="1">
    <location>
        <position position="243"/>
    </location>
    <ligand>
        <name>sn-glycerol 3-phosphate</name>
        <dbReference type="ChEBI" id="CHEBI:57597"/>
    </ligand>
</feature>
<feature type="binding site" evidence="1">
    <location>
        <position position="244"/>
    </location>
    <ligand>
        <name>glycerol</name>
        <dbReference type="ChEBI" id="CHEBI:17754"/>
    </ligand>
</feature>
<feature type="binding site" evidence="1">
    <location>
        <position position="265"/>
    </location>
    <ligand>
        <name>ADP</name>
        <dbReference type="ChEBI" id="CHEBI:456216"/>
    </ligand>
</feature>
<feature type="binding site" evidence="1">
    <location>
        <position position="265"/>
    </location>
    <ligand>
        <name>ATP</name>
        <dbReference type="ChEBI" id="CHEBI:30616"/>
    </ligand>
</feature>
<feature type="binding site" evidence="1">
    <location>
        <position position="308"/>
    </location>
    <ligand>
        <name>ADP</name>
        <dbReference type="ChEBI" id="CHEBI:456216"/>
    </ligand>
</feature>
<feature type="binding site" evidence="1">
    <location>
        <position position="308"/>
    </location>
    <ligand>
        <name>ATP</name>
        <dbReference type="ChEBI" id="CHEBI:30616"/>
    </ligand>
</feature>
<feature type="binding site" evidence="1">
    <location>
        <position position="312"/>
    </location>
    <ligand>
        <name>ATP</name>
        <dbReference type="ChEBI" id="CHEBI:30616"/>
    </ligand>
</feature>
<feature type="binding site" evidence="1">
    <location>
        <position position="409"/>
    </location>
    <ligand>
        <name>ADP</name>
        <dbReference type="ChEBI" id="CHEBI:456216"/>
    </ligand>
</feature>
<feature type="binding site" evidence="1">
    <location>
        <position position="409"/>
    </location>
    <ligand>
        <name>ATP</name>
        <dbReference type="ChEBI" id="CHEBI:30616"/>
    </ligand>
</feature>
<feature type="binding site" evidence="1">
    <location>
        <position position="413"/>
    </location>
    <ligand>
        <name>ADP</name>
        <dbReference type="ChEBI" id="CHEBI:456216"/>
    </ligand>
</feature>
<name>GLPK_CLOB6</name>
<comment type="function">
    <text evidence="1">Key enzyme in the regulation of glycerol uptake and metabolism. Catalyzes the phosphorylation of glycerol to yield sn-glycerol 3-phosphate.</text>
</comment>
<comment type="catalytic activity">
    <reaction evidence="1">
        <text>glycerol + ATP = sn-glycerol 3-phosphate + ADP + H(+)</text>
        <dbReference type="Rhea" id="RHEA:21644"/>
        <dbReference type="ChEBI" id="CHEBI:15378"/>
        <dbReference type="ChEBI" id="CHEBI:17754"/>
        <dbReference type="ChEBI" id="CHEBI:30616"/>
        <dbReference type="ChEBI" id="CHEBI:57597"/>
        <dbReference type="ChEBI" id="CHEBI:456216"/>
        <dbReference type="EC" id="2.7.1.30"/>
    </reaction>
</comment>
<comment type="activity regulation">
    <text evidence="1">Activated by phosphorylation and inhibited by fructose 1,6-bisphosphate (FBP).</text>
</comment>
<comment type="pathway">
    <text evidence="1">Polyol metabolism; glycerol degradation via glycerol kinase pathway; sn-glycerol 3-phosphate from glycerol: step 1/1.</text>
</comment>
<comment type="subunit">
    <text evidence="1">Homotetramer and homodimer (in equilibrium).</text>
</comment>
<comment type="similarity">
    <text evidence="1">Belongs to the FGGY kinase family.</text>
</comment>
<sequence length="498" mass="55393">MEKYIMSLDQGTTSSRCIIFNKKGEIVSVAQKEFTQIYPKAGWVEHDPLEIWGKQAGVAGEALNIARISPEQIAGIGITNQRETTVVWNKRTGMPVYNAIVWQCRRTAGYCDELREKGIDKTIKEKTGLMLDAYFSATKIKWILDNVEGARELAEKGDLLFGNIDTWLIWNMTKGKIHVTDYTNASRTMLFNIHELKWDEELLEILDIPKSMLPEVKPSSCVYGETDEILFGVSIPISGDAGDQQAALFGQTCFNAGMAKNTYGTGCFLLMNTGEKAVDSKNGLLTTIAVGIDGKVEYALEGSIFIGGAVIQWLRDELRMVKTAQETEKYATEVEDNNGVYLVPAFVGIGAPYWDSYARGTILGLTRGAKKEHIIRAALESMAYQTHDVLKAMEEDSGIELKALKVDGGACQNNFLMQFQSDILGVEVDRPEVVETTALGAAYLAGLAVGYWKDRNEISQNWAISRSFAPAMEDEKREKLIKGWHKAVTKAMDWEDKE</sequence>
<dbReference type="EC" id="2.7.1.30" evidence="1"/>
<dbReference type="EMBL" id="CP001083">
    <property type="protein sequence ID" value="ACQ54503.1"/>
    <property type="molecule type" value="Genomic_DNA"/>
</dbReference>
<dbReference type="RefSeq" id="WP_003361253.1">
    <property type="nucleotide sequence ID" value="NC_012658.1"/>
</dbReference>
<dbReference type="SMR" id="C3L254"/>
<dbReference type="KEGG" id="cbi:CLJ_B3012"/>
<dbReference type="HOGENOM" id="CLU_009281_2_3_9"/>
<dbReference type="UniPathway" id="UPA00618">
    <property type="reaction ID" value="UER00672"/>
</dbReference>
<dbReference type="Proteomes" id="UP000002333">
    <property type="component" value="Chromosome"/>
</dbReference>
<dbReference type="GO" id="GO:0005829">
    <property type="term" value="C:cytosol"/>
    <property type="evidence" value="ECO:0007669"/>
    <property type="project" value="TreeGrafter"/>
</dbReference>
<dbReference type="GO" id="GO:0005524">
    <property type="term" value="F:ATP binding"/>
    <property type="evidence" value="ECO:0007669"/>
    <property type="project" value="UniProtKB-UniRule"/>
</dbReference>
<dbReference type="GO" id="GO:0004370">
    <property type="term" value="F:glycerol kinase activity"/>
    <property type="evidence" value="ECO:0000250"/>
    <property type="project" value="UniProtKB"/>
</dbReference>
<dbReference type="GO" id="GO:0019563">
    <property type="term" value="P:glycerol catabolic process"/>
    <property type="evidence" value="ECO:0007669"/>
    <property type="project" value="UniProtKB-UniRule"/>
</dbReference>
<dbReference type="GO" id="GO:0006071">
    <property type="term" value="P:glycerol metabolic process"/>
    <property type="evidence" value="ECO:0000250"/>
    <property type="project" value="UniProtKB"/>
</dbReference>
<dbReference type="GO" id="GO:0006072">
    <property type="term" value="P:glycerol-3-phosphate metabolic process"/>
    <property type="evidence" value="ECO:0007669"/>
    <property type="project" value="InterPro"/>
</dbReference>
<dbReference type="CDD" id="cd07786">
    <property type="entry name" value="FGGY_EcGK_like"/>
    <property type="match status" value="1"/>
</dbReference>
<dbReference type="FunFam" id="3.30.420.40:FF:000007">
    <property type="entry name" value="Glycerol kinase"/>
    <property type="match status" value="1"/>
</dbReference>
<dbReference type="FunFam" id="3.30.420.40:FF:000008">
    <property type="entry name" value="Glycerol kinase"/>
    <property type="match status" value="1"/>
</dbReference>
<dbReference type="Gene3D" id="3.30.420.40">
    <property type="match status" value="2"/>
</dbReference>
<dbReference type="HAMAP" id="MF_00186">
    <property type="entry name" value="Glycerol_kin"/>
    <property type="match status" value="1"/>
</dbReference>
<dbReference type="InterPro" id="IPR043129">
    <property type="entry name" value="ATPase_NBD"/>
</dbReference>
<dbReference type="InterPro" id="IPR000577">
    <property type="entry name" value="Carb_kinase_FGGY"/>
</dbReference>
<dbReference type="InterPro" id="IPR018483">
    <property type="entry name" value="Carb_kinase_FGGY_CS"/>
</dbReference>
<dbReference type="InterPro" id="IPR018485">
    <property type="entry name" value="FGGY_C"/>
</dbReference>
<dbReference type="InterPro" id="IPR018484">
    <property type="entry name" value="FGGY_N"/>
</dbReference>
<dbReference type="InterPro" id="IPR005999">
    <property type="entry name" value="Glycerol_kin"/>
</dbReference>
<dbReference type="NCBIfam" id="TIGR01311">
    <property type="entry name" value="glycerol_kin"/>
    <property type="match status" value="1"/>
</dbReference>
<dbReference type="NCBIfam" id="NF000756">
    <property type="entry name" value="PRK00047.1"/>
    <property type="match status" value="1"/>
</dbReference>
<dbReference type="PANTHER" id="PTHR10196:SF69">
    <property type="entry name" value="GLYCEROL KINASE"/>
    <property type="match status" value="1"/>
</dbReference>
<dbReference type="PANTHER" id="PTHR10196">
    <property type="entry name" value="SUGAR KINASE"/>
    <property type="match status" value="1"/>
</dbReference>
<dbReference type="Pfam" id="PF02782">
    <property type="entry name" value="FGGY_C"/>
    <property type="match status" value="1"/>
</dbReference>
<dbReference type="Pfam" id="PF00370">
    <property type="entry name" value="FGGY_N"/>
    <property type="match status" value="1"/>
</dbReference>
<dbReference type="PIRSF" id="PIRSF000538">
    <property type="entry name" value="GlpK"/>
    <property type="match status" value="1"/>
</dbReference>
<dbReference type="SUPFAM" id="SSF53067">
    <property type="entry name" value="Actin-like ATPase domain"/>
    <property type="match status" value="2"/>
</dbReference>
<dbReference type="PROSITE" id="PS00933">
    <property type="entry name" value="FGGY_KINASES_1"/>
    <property type="match status" value="1"/>
</dbReference>
<dbReference type="PROSITE" id="PS00445">
    <property type="entry name" value="FGGY_KINASES_2"/>
    <property type="match status" value="1"/>
</dbReference>
<accession>C3L254</accession>
<protein>
    <recommendedName>
        <fullName evidence="1">Glycerol kinase</fullName>
        <ecNumber evidence="1">2.7.1.30</ecNumber>
    </recommendedName>
    <alternativeName>
        <fullName evidence="1">ATP:glycerol 3-phosphotransferase</fullName>
    </alternativeName>
    <alternativeName>
        <fullName evidence="1">Glycerokinase</fullName>
        <shortName evidence="1">GK</shortName>
    </alternativeName>
</protein>
<gene>
    <name evidence="1" type="primary">glpK</name>
    <name type="ordered locus">CLJ_B3012</name>
</gene>
<organism>
    <name type="scientific">Clostridium botulinum (strain 657 / Type Ba4)</name>
    <dbReference type="NCBI Taxonomy" id="515621"/>
    <lineage>
        <taxon>Bacteria</taxon>
        <taxon>Bacillati</taxon>
        <taxon>Bacillota</taxon>
        <taxon>Clostridia</taxon>
        <taxon>Eubacteriales</taxon>
        <taxon>Clostridiaceae</taxon>
        <taxon>Clostridium</taxon>
    </lineage>
</organism>
<reference key="1">
    <citation type="submission" date="2008-05" db="EMBL/GenBank/DDBJ databases">
        <title>Genome sequence of Clostridium botulinum Ba4 strain 657.</title>
        <authorList>
            <person name="Shrivastava S."/>
            <person name="Brown J.L."/>
            <person name="Bruce D."/>
            <person name="Detter C."/>
            <person name="Munk C."/>
            <person name="Smith L.A."/>
            <person name="Smith T.J."/>
            <person name="Sutton G."/>
            <person name="Brettin T.S."/>
        </authorList>
    </citation>
    <scope>NUCLEOTIDE SEQUENCE [LARGE SCALE GENOMIC DNA]</scope>
    <source>
        <strain>657 / Type Ba4</strain>
    </source>
</reference>
<evidence type="ECO:0000255" key="1">
    <source>
        <dbReference type="HAMAP-Rule" id="MF_00186"/>
    </source>
</evidence>